<protein>
    <recommendedName>
        <fullName evidence="1">ATP synthase subunit b 1</fullName>
    </recommendedName>
    <alternativeName>
        <fullName evidence="1">ATP synthase F(0) sector subunit b 1</fullName>
    </alternativeName>
    <alternativeName>
        <fullName evidence="1">ATPase subunit I 1</fullName>
    </alternativeName>
    <alternativeName>
        <fullName evidence="1">F-type ATPase subunit b 1</fullName>
        <shortName evidence="1">F-ATPase subunit b 1</shortName>
    </alternativeName>
</protein>
<keyword id="KW-0066">ATP synthesis</keyword>
<keyword id="KW-0138">CF(0)</keyword>
<keyword id="KW-0375">Hydrogen ion transport</keyword>
<keyword id="KW-0406">Ion transport</keyword>
<keyword id="KW-0472">Membrane</keyword>
<keyword id="KW-1185">Reference proteome</keyword>
<keyword id="KW-0793">Thylakoid</keyword>
<keyword id="KW-0812">Transmembrane</keyword>
<keyword id="KW-1133">Transmembrane helix</keyword>
<keyword id="KW-0813">Transport</keyword>
<reference key="1">
    <citation type="submission" date="2008-02" db="EMBL/GenBank/DDBJ databases">
        <title>Complete sequence of Synechococcus sp. PCC 7002.</title>
        <authorList>
            <person name="Li T."/>
            <person name="Zhao J."/>
            <person name="Zhao C."/>
            <person name="Liu Z."/>
            <person name="Zhao F."/>
            <person name="Marquardt J."/>
            <person name="Nomura C.T."/>
            <person name="Persson S."/>
            <person name="Detter J.C."/>
            <person name="Richardson P.M."/>
            <person name="Lanz C."/>
            <person name="Schuster S.C."/>
            <person name="Wang J."/>
            <person name="Li S."/>
            <person name="Huang X."/>
            <person name="Cai T."/>
            <person name="Yu Z."/>
            <person name="Luo J."/>
            <person name="Zhao J."/>
            <person name="Bryant D.A."/>
        </authorList>
    </citation>
    <scope>NUCLEOTIDE SEQUENCE [LARGE SCALE GENOMIC DNA]</scope>
    <source>
        <strain>ATCC 27264 / PCC 7002 / PR-6</strain>
    </source>
</reference>
<comment type="function">
    <text evidence="1">F(1)F(0) ATP synthase produces ATP from ADP in the presence of a proton or sodium gradient. F-type ATPases consist of two structural domains, F(1) containing the extramembraneous catalytic core and F(0) containing the membrane proton channel, linked together by a central stalk and a peripheral stalk. During catalysis, ATP synthesis in the catalytic domain of F(1) is coupled via a rotary mechanism of the central stalk subunits to proton translocation.</text>
</comment>
<comment type="function">
    <text evidence="1">Component of the F(0) channel, it forms part of the peripheral stalk, linking F(1) to F(0).</text>
</comment>
<comment type="subunit">
    <text evidence="1">F-type ATPases have 2 components, F(1) - the catalytic core - and F(0) - the membrane proton channel. F(1) has five subunits: alpha(3), beta(3), gamma(1), delta(1), epsilon(1). F(0) has four main subunits: a(1), b(1), b'(1) and c(10-14). The alpha and beta chains form an alternating ring which encloses part of the gamma chain. F(1) is attached to F(0) by a central stalk formed by the gamma and epsilon chains, while a peripheral stalk is formed by the delta, b and b' chains.</text>
</comment>
<comment type="subcellular location">
    <subcellularLocation>
        <location evidence="1">Cellular thylakoid membrane</location>
        <topology evidence="1">Single-pass membrane protein</topology>
    </subcellularLocation>
</comment>
<comment type="similarity">
    <text evidence="1">Belongs to the ATPase B chain family.</text>
</comment>
<feature type="chain" id="PRO_0000368824" description="ATP synthase subunit b 1">
    <location>
        <begin position="1"/>
        <end position="175"/>
    </location>
</feature>
<feature type="transmembrane region" description="Helical" evidence="1">
    <location>
        <begin position="26"/>
        <end position="48"/>
    </location>
</feature>
<proteinExistence type="inferred from homology"/>
<organism>
    <name type="scientific">Picosynechococcus sp. (strain ATCC 27264 / PCC 7002 / PR-6)</name>
    <name type="common">Agmenellum quadruplicatum</name>
    <dbReference type="NCBI Taxonomy" id="32049"/>
    <lineage>
        <taxon>Bacteria</taxon>
        <taxon>Bacillati</taxon>
        <taxon>Cyanobacteriota</taxon>
        <taxon>Cyanophyceae</taxon>
        <taxon>Oscillatoriophycideae</taxon>
        <taxon>Chroococcales</taxon>
        <taxon>Geminocystaceae</taxon>
        <taxon>Picosynechococcus</taxon>
    </lineage>
</organism>
<name>ATPF1_PICP2</name>
<gene>
    <name evidence="1" type="primary">atpF1</name>
    <name type="ordered locus">SYNPCC7002_A0736</name>
</gene>
<sequence length="175" mass="18991">MGIISYLATASEGGFHLNFDILETNIINLAIIIGVLYVYGSKFIGNILETRKSKIVADLEDAENRAKKAQEALTKAQKDLEQAQAQAAKIREDAKVAAEKTKQDILAKGRDEVEKLKASAVKELSTEQAKVITELKRRVAELALAKVEAQLRSDLDESAQAKLVDRSIAQLGGGA</sequence>
<evidence type="ECO:0000255" key="1">
    <source>
        <dbReference type="HAMAP-Rule" id="MF_01398"/>
    </source>
</evidence>
<dbReference type="EMBL" id="CP000951">
    <property type="protein sequence ID" value="ACA98741.1"/>
    <property type="molecule type" value="Genomic_DNA"/>
</dbReference>
<dbReference type="RefSeq" id="WP_012306365.1">
    <property type="nucleotide sequence ID" value="NZ_JAHHPU010000001.1"/>
</dbReference>
<dbReference type="SMR" id="B1XHZ0"/>
<dbReference type="STRING" id="32049.SYNPCC7002_A0736"/>
<dbReference type="KEGG" id="syp:SYNPCC7002_A0736"/>
<dbReference type="eggNOG" id="COG0711">
    <property type="taxonomic scope" value="Bacteria"/>
</dbReference>
<dbReference type="HOGENOM" id="CLU_079215_8_1_3"/>
<dbReference type="Proteomes" id="UP000001688">
    <property type="component" value="Chromosome"/>
</dbReference>
<dbReference type="GO" id="GO:0031676">
    <property type="term" value="C:plasma membrane-derived thylakoid membrane"/>
    <property type="evidence" value="ECO:0007669"/>
    <property type="project" value="UniProtKB-SubCell"/>
</dbReference>
<dbReference type="GO" id="GO:0045259">
    <property type="term" value="C:proton-transporting ATP synthase complex"/>
    <property type="evidence" value="ECO:0007669"/>
    <property type="project" value="UniProtKB-KW"/>
</dbReference>
<dbReference type="GO" id="GO:0046933">
    <property type="term" value="F:proton-transporting ATP synthase activity, rotational mechanism"/>
    <property type="evidence" value="ECO:0007669"/>
    <property type="project" value="UniProtKB-UniRule"/>
</dbReference>
<dbReference type="CDD" id="cd06503">
    <property type="entry name" value="ATP-synt_Fo_b"/>
    <property type="match status" value="1"/>
</dbReference>
<dbReference type="HAMAP" id="MF_01398">
    <property type="entry name" value="ATP_synth_b_bprime"/>
    <property type="match status" value="1"/>
</dbReference>
<dbReference type="InterPro" id="IPR028987">
    <property type="entry name" value="ATP_synth_B-like_membr_sf"/>
</dbReference>
<dbReference type="InterPro" id="IPR002146">
    <property type="entry name" value="ATP_synth_b/b'su_bac/chlpt"/>
</dbReference>
<dbReference type="InterPro" id="IPR005864">
    <property type="entry name" value="ATP_synth_F0_bsu_bac"/>
</dbReference>
<dbReference type="NCBIfam" id="TIGR01144">
    <property type="entry name" value="ATP_synt_b"/>
    <property type="match status" value="1"/>
</dbReference>
<dbReference type="NCBIfam" id="NF005606">
    <property type="entry name" value="PRK07352.1"/>
    <property type="match status" value="1"/>
</dbReference>
<dbReference type="PANTHER" id="PTHR34264">
    <property type="entry name" value="ATP SYNTHASE SUBUNIT B, CHLOROPLASTIC"/>
    <property type="match status" value="1"/>
</dbReference>
<dbReference type="PANTHER" id="PTHR34264:SF3">
    <property type="entry name" value="ATP SYNTHASE SUBUNIT B, CHLOROPLASTIC"/>
    <property type="match status" value="1"/>
</dbReference>
<dbReference type="Pfam" id="PF00430">
    <property type="entry name" value="ATP-synt_B"/>
    <property type="match status" value="1"/>
</dbReference>
<dbReference type="SUPFAM" id="SSF81573">
    <property type="entry name" value="F1F0 ATP synthase subunit B, membrane domain"/>
    <property type="match status" value="1"/>
</dbReference>
<accession>B1XHZ0</accession>